<proteinExistence type="inferred from homology"/>
<sequence>MTIAIYAGSFDPVTNGHIDVLKGALRLADQVIVAIGMHPGKKPLFSFDERVALIEASAKAVLHKDAARVSVIAFDGLVIDAARKHGAQLMVRGLRDGTDLDYEMQMAGMNGTMAPELQTVFLPADPAVRTITATLVRQIASMGGDIKPFVPVAVAAALNTKFKS</sequence>
<evidence type="ECO:0000255" key="1">
    <source>
        <dbReference type="HAMAP-Rule" id="MF_00151"/>
    </source>
</evidence>
<protein>
    <recommendedName>
        <fullName evidence="1">Phosphopantetheine adenylyltransferase</fullName>
        <ecNumber evidence="1">2.7.7.3</ecNumber>
    </recommendedName>
    <alternativeName>
        <fullName evidence="1">Dephospho-CoA pyrophosphorylase</fullName>
    </alternativeName>
    <alternativeName>
        <fullName evidence="1">Pantetheine-phosphate adenylyltransferase</fullName>
        <shortName evidence="1">PPAT</shortName>
    </alternativeName>
</protein>
<dbReference type="EC" id="2.7.7.3" evidence="1"/>
<dbReference type="EMBL" id="CP000708">
    <property type="protein sequence ID" value="ABQ61927.1"/>
    <property type="molecule type" value="Genomic_DNA"/>
</dbReference>
<dbReference type="RefSeq" id="WP_002964224.1">
    <property type="nucleotide sequence ID" value="NC_009505.1"/>
</dbReference>
<dbReference type="SMR" id="A5VQM2"/>
<dbReference type="GeneID" id="93016563"/>
<dbReference type="KEGG" id="bov:BOV_1056"/>
<dbReference type="HOGENOM" id="CLU_100149_0_1_5"/>
<dbReference type="PhylomeDB" id="A5VQM2"/>
<dbReference type="UniPathway" id="UPA00241">
    <property type="reaction ID" value="UER00355"/>
</dbReference>
<dbReference type="Proteomes" id="UP000006383">
    <property type="component" value="Chromosome I"/>
</dbReference>
<dbReference type="GO" id="GO:0005737">
    <property type="term" value="C:cytoplasm"/>
    <property type="evidence" value="ECO:0007669"/>
    <property type="project" value="UniProtKB-SubCell"/>
</dbReference>
<dbReference type="GO" id="GO:0005524">
    <property type="term" value="F:ATP binding"/>
    <property type="evidence" value="ECO:0007669"/>
    <property type="project" value="UniProtKB-KW"/>
</dbReference>
<dbReference type="GO" id="GO:0004595">
    <property type="term" value="F:pantetheine-phosphate adenylyltransferase activity"/>
    <property type="evidence" value="ECO:0007669"/>
    <property type="project" value="UniProtKB-UniRule"/>
</dbReference>
<dbReference type="GO" id="GO:0015937">
    <property type="term" value="P:coenzyme A biosynthetic process"/>
    <property type="evidence" value="ECO:0007669"/>
    <property type="project" value="UniProtKB-UniRule"/>
</dbReference>
<dbReference type="CDD" id="cd02163">
    <property type="entry name" value="PPAT"/>
    <property type="match status" value="1"/>
</dbReference>
<dbReference type="Gene3D" id="3.40.50.620">
    <property type="entry name" value="HUPs"/>
    <property type="match status" value="1"/>
</dbReference>
<dbReference type="HAMAP" id="MF_00151">
    <property type="entry name" value="PPAT_bact"/>
    <property type="match status" value="1"/>
</dbReference>
<dbReference type="InterPro" id="IPR004821">
    <property type="entry name" value="Cyt_trans-like"/>
</dbReference>
<dbReference type="InterPro" id="IPR001980">
    <property type="entry name" value="PPAT"/>
</dbReference>
<dbReference type="InterPro" id="IPR014729">
    <property type="entry name" value="Rossmann-like_a/b/a_fold"/>
</dbReference>
<dbReference type="NCBIfam" id="TIGR01510">
    <property type="entry name" value="coaD_prev_kdtB"/>
    <property type="match status" value="1"/>
</dbReference>
<dbReference type="NCBIfam" id="TIGR00125">
    <property type="entry name" value="cyt_tran_rel"/>
    <property type="match status" value="1"/>
</dbReference>
<dbReference type="PANTHER" id="PTHR21342">
    <property type="entry name" value="PHOSPHOPANTETHEINE ADENYLYLTRANSFERASE"/>
    <property type="match status" value="1"/>
</dbReference>
<dbReference type="PANTHER" id="PTHR21342:SF1">
    <property type="entry name" value="PHOSPHOPANTETHEINE ADENYLYLTRANSFERASE"/>
    <property type="match status" value="1"/>
</dbReference>
<dbReference type="Pfam" id="PF01467">
    <property type="entry name" value="CTP_transf_like"/>
    <property type="match status" value="1"/>
</dbReference>
<dbReference type="PRINTS" id="PR01020">
    <property type="entry name" value="LPSBIOSNTHSS"/>
</dbReference>
<dbReference type="SUPFAM" id="SSF52374">
    <property type="entry name" value="Nucleotidylyl transferase"/>
    <property type="match status" value="1"/>
</dbReference>
<accession>A5VQM2</accession>
<keyword id="KW-0067">ATP-binding</keyword>
<keyword id="KW-0173">Coenzyme A biosynthesis</keyword>
<keyword id="KW-0963">Cytoplasm</keyword>
<keyword id="KW-0460">Magnesium</keyword>
<keyword id="KW-0547">Nucleotide-binding</keyword>
<keyword id="KW-0548">Nucleotidyltransferase</keyword>
<keyword id="KW-0808">Transferase</keyword>
<reference key="1">
    <citation type="journal article" date="2009" name="PLoS ONE">
        <title>Genome degradation in Brucella ovis corresponds with narrowing of its host range and tissue tropism.</title>
        <authorList>
            <person name="Tsolis R.M."/>
            <person name="Seshadri R."/>
            <person name="Santos R.L."/>
            <person name="Sangari F.J."/>
            <person name="Lobo J.M."/>
            <person name="de Jong M.F."/>
            <person name="Ren Q."/>
            <person name="Myers G."/>
            <person name="Brinkac L.M."/>
            <person name="Nelson W.C."/>
            <person name="Deboy R.T."/>
            <person name="Angiuoli S."/>
            <person name="Khouri H."/>
            <person name="Dimitrov G."/>
            <person name="Robinson J.R."/>
            <person name="Mulligan S."/>
            <person name="Walker R.L."/>
            <person name="Elzer P.E."/>
            <person name="Hassan K.A."/>
            <person name="Paulsen I.T."/>
        </authorList>
    </citation>
    <scope>NUCLEOTIDE SEQUENCE [LARGE SCALE GENOMIC DNA]</scope>
    <source>
        <strain>ATCC 25840 / 63/290 / NCTC 10512</strain>
    </source>
</reference>
<comment type="function">
    <text evidence="1">Reversibly transfers an adenylyl group from ATP to 4'-phosphopantetheine, yielding dephospho-CoA (dPCoA) and pyrophosphate.</text>
</comment>
<comment type="catalytic activity">
    <reaction evidence="1">
        <text>(R)-4'-phosphopantetheine + ATP + H(+) = 3'-dephospho-CoA + diphosphate</text>
        <dbReference type="Rhea" id="RHEA:19801"/>
        <dbReference type="ChEBI" id="CHEBI:15378"/>
        <dbReference type="ChEBI" id="CHEBI:30616"/>
        <dbReference type="ChEBI" id="CHEBI:33019"/>
        <dbReference type="ChEBI" id="CHEBI:57328"/>
        <dbReference type="ChEBI" id="CHEBI:61723"/>
        <dbReference type="EC" id="2.7.7.3"/>
    </reaction>
</comment>
<comment type="cofactor">
    <cofactor evidence="1">
        <name>Mg(2+)</name>
        <dbReference type="ChEBI" id="CHEBI:18420"/>
    </cofactor>
</comment>
<comment type="pathway">
    <text evidence="1">Cofactor biosynthesis; coenzyme A biosynthesis; CoA from (R)-pantothenate: step 4/5.</text>
</comment>
<comment type="subunit">
    <text evidence="1">Homohexamer.</text>
</comment>
<comment type="subcellular location">
    <subcellularLocation>
        <location evidence="1">Cytoplasm</location>
    </subcellularLocation>
</comment>
<comment type="similarity">
    <text evidence="1">Belongs to the bacterial CoaD family.</text>
</comment>
<feature type="chain" id="PRO_1000011102" description="Phosphopantetheine adenylyltransferase">
    <location>
        <begin position="1"/>
        <end position="164"/>
    </location>
</feature>
<feature type="binding site" evidence="1">
    <location>
        <begin position="9"/>
        <end position="10"/>
    </location>
    <ligand>
        <name>ATP</name>
        <dbReference type="ChEBI" id="CHEBI:30616"/>
    </ligand>
</feature>
<feature type="binding site" evidence="1">
    <location>
        <position position="9"/>
    </location>
    <ligand>
        <name>substrate</name>
    </ligand>
</feature>
<feature type="binding site" evidence="1">
    <location>
        <position position="17"/>
    </location>
    <ligand>
        <name>ATP</name>
        <dbReference type="ChEBI" id="CHEBI:30616"/>
    </ligand>
</feature>
<feature type="binding site" evidence="1">
    <location>
        <position position="41"/>
    </location>
    <ligand>
        <name>substrate</name>
    </ligand>
</feature>
<feature type="binding site" evidence="1">
    <location>
        <position position="78"/>
    </location>
    <ligand>
        <name>substrate</name>
    </ligand>
</feature>
<feature type="binding site" evidence="1">
    <location>
        <position position="92"/>
    </location>
    <ligand>
        <name>substrate</name>
    </ligand>
</feature>
<feature type="binding site" evidence="1">
    <location>
        <begin position="93"/>
        <end position="95"/>
    </location>
    <ligand>
        <name>ATP</name>
        <dbReference type="ChEBI" id="CHEBI:30616"/>
    </ligand>
</feature>
<feature type="binding site" evidence="1">
    <location>
        <position position="103"/>
    </location>
    <ligand>
        <name>ATP</name>
        <dbReference type="ChEBI" id="CHEBI:30616"/>
    </ligand>
</feature>
<feature type="binding site" evidence="1">
    <location>
        <begin position="128"/>
        <end position="134"/>
    </location>
    <ligand>
        <name>ATP</name>
        <dbReference type="ChEBI" id="CHEBI:30616"/>
    </ligand>
</feature>
<feature type="site" description="Transition state stabilizer" evidence="1">
    <location>
        <position position="17"/>
    </location>
</feature>
<organism>
    <name type="scientific">Brucella ovis (strain ATCC 25840 / 63/290 / NCTC 10512)</name>
    <dbReference type="NCBI Taxonomy" id="444178"/>
    <lineage>
        <taxon>Bacteria</taxon>
        <taxon>Pseudomonadati</taxon>
        <taxon>Pseudomonadota</taxon>
        <taxon>Alphaproteobacteria</taxon>
        <taxon>Hyphomicrobiales</taxon>
        <taxon>Brucellaceae</taxon>
        <taxon>Brucella/Ochrobactrum group</taxon>
        <taxon>Brucella</taxon>
    </lineage>
</organism>
<name>COAD_BRUO2</name>
<gene>
    <name evidence="1" type="primary">coaD</name>
    <name type="ordered locus">BOV_1056</name>
</gene>